<reference key="1">
    <citation type="journal article" date="2007" name="J. Bacteriol.">
        <title>Genome-wide transcriptional changes in Streptococcus gordonii in response to competence signaling peptide.</title>
        <authorList>
            <person name="Vickerman M.M."/>
            <person name="Iobst S."/>
            <person name="Jesionowski A.M."/>
            <person name="Gill S.R."/>
        </authorList>
    </citation>
    <scope>NUCLEOTIDE SEQUENCE [LARGE SCALE GENOMIC DNA]</scope>
    <source>
        <strain>Challis / ATCC 35105 / BCRC 15272 / CH1 / DL1 / V288</strain>
    </source>
</reference>
<accession>A8AWT5</accession>
<comment type="function">
    <text evidence="1">Displays ATPase and GTPase activities.</text>
</comment>
<comment type="similarity">
    <text evidence="1">Belongs to the RapZ-like family.</text>
</comment>
<organism>
    <name type="scientific">Streptococcus gordonii (strain Challis / ATCC 35105 / BCRC 15272 / CH1 / DL1 / V288)</name>
    <dbReference type="NCBI Taxonomy" id="467705"/>
    <lineage>
        <taxon>Bacteria</taxon>
        <taxon>Bacillati</taxon>
        <taxon>Bacillota</taxon>
        <taxon>Bacilli</taxon>
        <taxon>Lactobacillales</taxon>
        <taxon>Streptococcaceae</taxon>
        <taxon>Streptococcus</taxon>
    </lineage>
</organism>
<dbReference type="EMBL" id="CP000725">
    <property type="protein sequence ID" value="ABV11125.1"/>
    <property type="molecule type" value="Genomic_DNA"/>
</dbReference>
<dbReference type="RefSeq" id="WP_012000376.1">
    <property type="nucleotide sequence ID" value="NC_009785.1"/>
</dbReference>
<dbReference type="SMR" id="A8AWT5"/>
<dbReference type="STRING" id="467705.SGO_0954"/>
<dbReference type="GeneID" id="93787200"/>
<dbReference type="KEGG" id="sgo:SGO_0954"/>
<dbReference type="eggNOG" id="COG1660">
    <property type="taxonomic scope" value="Bacteria"/>
</dbReference>
<dbReference type="HOGENOM" id="CLU_059558_0_0_9"/>
<dbReference type="Proteomes" id="UP000001131">
    <property type="component" value="Chromosome"/>
</dbReference>
<dbReference type="GO" id="GO:0005524">
    <property type="term" value="F:ATP binding"/>
    <property type="evidence" value="ECO:0007669"/>
    <property type="project" value="UniProtKB-UniRule"/>
</dbReference>
<dbReference type="GO" id="GO:0005525">
    <property type="term" value="F:GTP binding"/>
    <property type="evidence" value="ECO:0007669"/>
    <property type="project" value="UniProtKB-UniRule"/>
</dbReference>
<dbReference type="Gene3D" id="3.40.50.300">
    <property type="entry name" value="P-loop containing nucleotide triphosphate hydrolases"/>
    <property type="match status" value="1"/>
</dbReference>
<dbReference type="HAMAP" id="MF_00636">
    <property type="entry name" value="RapZ_like"/>
    <property type="match status" value="1"/>
</dbReference>
<dbReference type="InterPro" id="IPR027417">
    <property type="entry name" value="P-loop_NTPase"/>
</dbReference>
<dbReference type="InterPro" id="IPR005337">
    <property type="entry name" value="RapZ-like"/>
</dbReference>
<dbReference type="InterPro" id="IPR053930">
    <property type="entry name" value="RapZ-like_N"/>
</dbReference>
<dbReference type="InterPro" id="IPR053931">
    <property type="entry name" value="RapZ_C"/>
</dbReference>
<dbReference type="NCBIfam" id="NF003828">
    <property type="entry name" value="PRK05416.1"/>
    <property type="match status" value="1"/>
</dbReference>
<dbReference type="PANTHER" id="PTHR30448">
    <property type="entry name" value="RNASE ADAPTER PROTEIN RAPZ"/>
    <property type="match status" value="1"/>
</dbReference>
<dbReference type="PANTHER" id="PTHR30448:SF0">
    <property type="entry name" value="RNASE ADAPTER PROTEIN RAPZ"/>
    <property type="match status" value="1"/>
</dbReference>
<dbReference type="Pfam" id="PF22740">
    <property type="entry name" value="PapZ_C"/>
    <property type="match status" value="1"/>
</dbReference>
<dbReference type="Pfam" id="PF03668">
    <property type="entry name" value="RapZ-like_N"/>
    <property type="match status" value="1"/>
</dbReference>
<dbReference type="PIRSF" id="PIRSF005052">
    <property type="entry name" value="P-loopkin"/>
    <property type="match status" value="1"/>
</dbReference>
<dbReference type="SUPFAM" id="SSF52540">
    <property type="entry name" value="P-loop containing nucleoside triphosphate hydrolases"/>
    <property type="match status" value="1"/>
</dbReference>
<feature type="chain" id="PRO_1000082670" description="Nucleotide-binding protein SGO_0954">
    <location>
        <begin position="1"/>
        <end position="296"/>
    </location>
</feature>
<feature type="binding site" evidence="1">
    <location>
        <begin position="13"/>
        <end position="20"/>
    </location>
    <ligand>
        <name>ATP</name>
        <dbReference type="ChEBI" id="CHEBI:30616"/>
    </ligand>
</feature>
<feature type="binding site" evidence="1">
    <location>
        <begin position="63"/>
        <end position="66"/>
    </location>
    <ligand>
        <name>GTP</name>
        <dbReference type="ChEBI" id="CHEBI:37565"/>
    </ligand>
</feature>
<protein>
    <recommendedName>
        <fullName evidence="1">Nucleotide-binding protein SGO_0954</fullName>
    </recommendedName>
</protein>
<proteinExistence type="inferred from homology"/>
<keyword id="KW-0067">ATP-binding</keyword>
<keyword id="KW-0342">GTP-binding</keyword>
<keyword id="KW-0547">Nucleotide-binding</keyword>
<keyword id="KW-1185">Reference proteome</keyword>
<evidence type="ECO:0000255" key="1">
    <source>
        <dbReference type="HAMAP-Rule" id="MF_00636"/>
    </source>
</evidence>
<name>Y954_STRGC</name>
<gene>
    <name type="ordered locus">SGO_0954</name>
</gene>
<sequence>MPEKEMKLVIVTGMSGAGKTVAIQSFEDLGYFTIDNIPPTLVPKFLQLLETTNDIDKLALVVDMRSRSFFAEIQNVLDQVENNLEIDFKILFLDAADKELVARYKETRRSHPLAADGRILDGIKLERELLAPLKNLSQNVVDTTDLTPRELRKTISEQFSDQSQQQSFRVEVMSFGFKYGLPLDADLVFDVRFLPNPYYQPELRNQTGLDKPVFDYVMNHEESTEFYQHLLNLIEPILPGYKKEGKSVLTIAVGCTGGQHRSVAFAQRLADDLAKNWPVNCSHRDKDRRKETVNRS</sequence>